<organism>
    <name type="scientific">Rattus norvegicus</name>
    <name type="common">Rat</name>
    <dbReference type="NCBI Taxonomy" id="10116"/>
    <lineage>
        <taxon>Eukaryota</taxon>
        <taxon>Metazoa</taxon>
        <taxon>Chordata</taxon>
        <taxon>Craniata</taxon>
        <taxon>Vertebrata</taxon>
        <taxon>Euteleostomi</taxon>
        <taxon>Mammalia</taxon>
        <taxon>Eutheria</taxon>
        <taxon>Euarchontoglires</taxon>
        <taxon>Glires</taxon>
        <taxon>Rodentia</taxon>
        <taxon>Myomorpha</taxon>
        <taxon>Muroidea</taxon>
        <taxon>Muridae</taxon>
        <taxon>Murinae</taxon>
        <taxon>Rattus</taxon>
    </lineage>
</organism>
<reference key="1">
    <citation type="submission" date="2004-02" db="EMBL/GenBank/DDBJ databases">
        <title>Cloning and sequencing of cDNA encoding DIPB from rat.</title>
        <authorList>
            <person name="Ju S.K."/>
        </authorList>
    </citation>
    <scope>NUCLEOTIDE SEQUENCE [MRNA]</scope>
    <source>
        <strain>Sprague-Dawley</strain>
        <tissue>Midbrain</tissue>
    </source>
</reference>
<keyword id="KW-0175">Coiled coil</keyword>
<keyword id="KW-0479">Metal-binding</keyword>
<keyword id="KW-0597">Phosphoprotein</keyword>
<keyword id="KW-1185">Reference proteome</keyword>
<keyword id="KW-0862">Zinc</keyword>
<keyword id="KW-0863">Zinc-finger</keyword>
<protein>
    <recommendedName>
        <fullName>Tripartite motif-containing protein 44</fullName>
    </recommendedName>
    <alternativeName>
        <fullName>Protein DIPB</fullName>
    </alternativeName>
</protein>
<gene>
    <name type="primary">Trim44</name>
    <name type="synonym">Dipb</name>
</gene>
<dbReference type="EMBL" id="AY551091">
    <property type="protein sequence ID" value="AAS58454.1"/>
    <property type="molecule type" value="mRNA"/>
</dbReference>
<dbReference type="RefSeq" id="NP_001013221.1">
    <property type="nucleotide sequence ID" value="NM_001013203.2"/>
</dbReference>
<dbReference type="SMR" id="Q6QA27"/>
<dbReference type="FunCoup" id="Q6QA27">
    <property type="interactions" value="1539"/>
</dbReference>
<dbReference type="STRING" id="10116.ENSRNOP00000007018"/>
<dbReference type="PhosphoSitePlus" id="Q6QA27"/>
<dbReference type="PaxDb" id="10116-ENSRNOP00000007018"/>
<dbReference type="Ensembl" id="ENSRNOT00000007018.8">
    <property type="protein sequence ID" value="ENSRNOP00000007018.8"/>
    <property type="gene ID" value="ENSRNOG00000005191.8"/>
</dbReference>
<dbReference type="GeneID" id="362172"/>
<dbReference type="KEGG" id="rno:362172"/>
<dbReference type="UCSC" id="RGD:1304877">
    <property type="organism name" value="rat"/>
</dbReference>
<dbReference type="AGR" id="RGD:1304877"/>
<dbReference type="CTD" id="54765"/>
<dbReference type="RGD" id="1304877">
    <property type="gene designation" value="Trim44"/>
</dbReference>
<dbReference type="eggNOG" id="ENOG502RHR7">
    <property type="taxonomic scope" value="Eukaryota"/>
</dbReference>
<dbReference type="InParanoid" id="Q6QA27"/>
<dbReference type="OMA" id="LREAYMW"/>
<dbReference type="OrthoDB" id="9049620at2759"/>
<dbReference type="PhylomeDB" id="Q6QA27"/>
<dbReference type="TreeFam" id="TF333911"/>
<dbReference type="PRO" id="PR:Q6QA27"/>
<dbReference type="Proteomes" id="UP000002494">
    <property type="component" value="Chromosome 3"/>
</dbReference>
<dbReference type="GO" id="GO:0005737">
    <property type="term" value="C:cytoplasm"/>
    <property type="evidence" value="ECO:0000314"/>
    <property type="project" value="RGD"/>
</dbReference>
<dbReference type="GO" id="GO:0061630">
    <property type="term" value="F:ubiquitin protein ligase activity"/>
    <property type="evidence" value="ECO:0000318"/>
    <property type="project" value="GO_Central"/>
</dbReference>
<dbReference type="GO" id="GO:0008270">
    <property type="term" value="F:zinc ion binding"/>
    <property type="evidence" value="ECO:0007669"/>
    <property type="project" value="UniProtKB-KW"/>
</dbReference>
<dbReference type="GO" id="GO:0045087">
    <property type="term" value="P:innate immune response"/>
    <property type="evidence" value="ECO:0000318"/>
    <property type="project" value="GO_Central"/>
</dbReference>
<dbReference type="GO" id="GO:0061944">
    <property type="term" value="P:negative regulation of protein K48-linked ubiquitination"/>
    <property type="evidence" value="ECO:0000266"/>
    <property type="project" value="RGD"/>
</dbReference>
<dbReference type="GO" id="GO:0001961">
    <property type="term" value="P:positive regulation of cytokine-mediated signaling pathway"/>
    <property type="evidence" value="ECO:0000266"/>
    <property type="project" value="RGD"/>
</dbReference>
<dbReference type="GO" id="GO:0002230">
    <property type="term" value="P:positive regulation of defense response to virus by host"/>
    <property type="evidence" value="ECO:0000266"/>
    <property type="project" value="RGD"/>
</dbReference>
<dbReference type="GO" id="GO:0045893">
    <property type="term" value="P:positive regulation of DNA-templated transcription"/>
    <property type="evidence" value="ECO:0000266"/>
    <property type="project" value="RGD"/>
</dbReference>
<dbReference type="GO" id="GO:1901224">
    <property type="term" value="P:positive regulation of non-canonical NF-kappaB signal transduction"/>
    <property type="evidence" value="ECO:0000266"/>
    <property type="project" value="RGD"/>
</dbReference>
<dbReference type="GO" id="GO:0050821">
    <property type="term" value="P:protein stabilization"/>
    <property type="evidence" value="ECO:0000266"/>
    <property type="project" value="RGD"/>
</dbReference>
<dbReference type="GO" id="GO:0010468">
    <property type="term" value="P:regulation of gene expression"/>
    <property type="evidence" value="ECO:0000266"/>
    <property type="project" value="RGD"/>
</dbReference>
<dbReference type="GO" id="GO:1990776">
    <property type="term" value="P:response to angiotensin"/>
    <property type="evidence" value="ECO:0000270"/>
    <property type="project" value="RGD"/>
</dbReference>
<dbReference type="CDD" id="cd19841">
    <property type="entry name" value="Bbox1_TRIM44"/>
    <property type="match status" value="1"/>
</dbReference>
<dbReference type="CDD" id="cd19784">
    <property type="entry name" value="Bbox2_TRIM44"/>
    <property type="match status" value="1"/>
</dbReference>
<dbReference type="Gene3D" id="4.10.830.40">
    <property type="match status" value="1"/>
</dbReference>
<dbReference type="Gene3D" id="3.30.160.60">
    <property type="entry name" value="Classic Zinc Finger"/>
    <property type="match status" value="1"/>
</dbReference>
<dbReference type="InterPro" id="IPR050143">
    <property type="entry name" value="TRIM/RBCC"/>
</dbReference>
<dbReference type="InterPro" id="IPR000315">
    <property type="entry name" value="Znf_B-box"/>
</dbReference>
<dbReference type="PANTHER" id="PTHR24103">
    <property type="entry name" value="E3 UBIQUITIN-PROTEIN LIGASE TRIM"/>
    <property type="match status" value="1"/>
</dbReference>
<dbReference type="Pfam" id="PF00643">
    <property type="entry name" value="zf-B_box"/>
    <property type="match status" value="1"/>
</dbReference>
<dbReference type="SMART" id="SM00336">
    <property type="entry name" value="BBOX"/>
    <property type="match status" value="1"/>
</dbReference>
<dbReference type="SUPFAM" id="SSF57845">
    <property type="entry name" value="B-box zinc-binding domain"/>
    <property type="match status" value="1"/>
</dbReference>
<dbReference type="PROSITE" id="PS50119">
    <property type="entry name" value="ZF_BBOX"/>
    <property type="match status" value="1"/>
</dbReference>
<proteinExistence type="evidence at transcript level"/>
<comment type="function">
    <text evidence="1">May play a role in the process of differentiation and maturation of neuronal cells (By similarity). May regulate the activity of TRIM17 (By similarity). Is a negative regulator of PAX6 expression (By similarity).</text>
</comment>
<comment type="subunit">
    <text evidence="1">Interacts (via coiled coil) with TRIM17 (via coiled coil).</text>
</comment>
<accession>Q6QA27</accession>
<name>TRI44_RAT</name>
<sequence>MASGVGAACEELPPDGTCDECEPDEAPGAEEVCRDCGFCYCRRHADAHRQKFLSHRLAAYVHGAQAWTPPASGDDALPEDVEAKGEAEGEVESEVGEEESESEVDSESEEESETEEDSEDESDEESEEDSEEEMEDEQESEAEEDNQEGESEAEGETEAESEFDPEIEMEAERVAKRKCPDHGLDLSTYCQEDRQLICVLCPVIGAHRGHQLSTLDEAFEELRSKDSGGLKAAMIELVERLKFKSSDPKVTRDQMKVFIQQEFKKVQKVIADEEQKALHLVDIQEAMATAHVTEILADIQSHMDRLMTQMAQAKEQLDTSNESAEPKAEGDEEGPSGASEEEDT</sequence>
<feature type="chain" id="PRO_0000220374" description="Tripartite motif-containing protein 44">
    <location>
        <begin position="1"/>
        <end position="344"/>
    </location>
</feature>
<feature type="zinc finger region" description="B box-type" evidence="4">
    <location>
        <begin position="174"/>
        <end position="215"/>
    </location>
</feature>
<feature type="region of interest" description="Disordered" evidence="5">
    <location>
        <begin position="69"/>
        <end position="165"/>
    </location>
</feature>
<feature type="region of interest" description="Disordered" evidence="5">
    <location>
        <begin position="309"/>
        <end position="344"/>
    </location>
</feature>
<feature type="coiled-coil region" evidence="3">
    <location>
        <begin position="290"/>
        <end position="325"/>
    </location>
</feature>
<feature type="compositionally biased region" description="Acidic residues" evidence="5">
    <location>
        <begin position="88"/>
        <end position="165"/>
    </location>
</feature>
<feature type="compositionally biased region" description="Acidic residues" evidence="5">
    <location>
        <begin position="330"/>
        <end position="344"/>
    </location>
</feature>
<feature type="binding site" evidence="4">
    <location>
        <position position="179"/>
    </location>
    <ligand>
        <name>Zn(2+)</name>
        <dbReference type="ChEBI" id="CHEBI:29105"/>
    </ligand>
</feature>
<feature type="binding site" evidence="4">
    <location>
        <position position="182"/>
    </location>
    <ligand>
        <name>Zn(2+)</name>
        <dbReference type="ChEBI" id="CHEBI:29105"/>
    </ligand>
</feature>
<feature type="binding site" evidence="4">
    <location>
        <position position="201"/>
    </location>
    <ligand>
        <name>Zn(2+)</name>
        <dbReference type="ChEBI" id="CHEBI:29105"/>
    </ligand>
</feature>
<feature type="binding site" evidence="4">
    <location>
        <position position="207"/>
    </location>
    <ligand>
        <name>Zn(2+)</name>
        <dbReference type="ChEBI" id="CHEBI:29105"/>
    </ligand>
</feature>
<feature type="modified residue" description="Phosphoserine" evidence="2">
    <location>
        <position position="336"/>
    </location>
</feature>
<feature type="modified residue" description="Phosphoserine" evidence="2">
    <location>
        <position position="339"/>
    </location>
</feature>
<evidence type="ECO:0000250" key="1">
    <source>
        <dbReference type="UniProtKB" id="Q96DX7"/>
    </source>
</evidence>
<evidence type="ECO:0000250" key="2">
    <source>
        <dbReference type="UniProtKB" id="Q9QXA7"/>
    </source>
</evidence>
<evidence type="ECO:0000255" key="3"/>
<evidence type="ECO:0000255" key="4">
    <source>
        <dbReference type="PROSITE-ProRule" id="PRU00024"/>
    </source>
</evidence>
<evidence type="ECO:0000256" key="5">
    <source>
        <dbReference type="SAM" id="MobiDB-lite"/>
    </source>
</evidence>